<dbReference type="PIR" id="A38041">
    <property type="entry name" value="CCHFGB"/>
</dbReference>
<dbReference type="SMR" id="P00036"/>
<dbReference type="OrthoDB" id="449280at2759"/>
<dbReference type="GO" id="GO:0005758">
    <property type="term" value="C:mitochondrial intermembrane space"/>
    <property type="evidence" value="ECO:0007669"/>
    <property type="project" value="UniProtKB-SubCell"/>
</dbReference>
<dbReference type="GO" id="GO:0009055">
    <property type="term" value="F:electron transfer activity"/>
    <property type="evidence" value="ECO:0007669"/>
    <property type="project" value="InterPro"/>
</dbReference>
<dbReference type="GO" id="GO:0020037">
    <property type="term" value="F:heme binding"/>
    <property type="evidence" value="ECO:0007669"/>
    <property type="project" value="InterPro"/>
</dbReference>
<dbReference type="GO" id="GO:0046872">
    <property type="term" value="F:metal ion binding"/>
    <property type="evidence" value="ECO:0007669"/>
    <property type="project" value="UniProtKB-KW"/>
</dbReference>
<dbReference type="FunFam" id="1.10.760.10:FF:000001">
    <property type="entry name" value="Cytochrome c iso-1"/>
    <property type="match status" value="1"/>
</dbReference>
<dbReference type="Gene3D" id="1.10.760.10">
    <property type="entry name" value="Cytochrome c-like domain"/>
    <property type="match status" value="1"/>
</dbReference>
<dbReference type="InterPro" id="IPR009056">
    <property type="entry name" value="Cyt_c-like_dom"/>
</dbReference>
<dbReference type="InterPro" id="IPR036909">
    <property type="entry name" value="Cyt_c-like_dom_sf"/>
</dbReference>
<dbReference type="InterPro" id="IPR002327">
    <property type="entry name" value="Cyt_c_1A/1B"/>
</dbReference>
<dbReference type="PANTHER" id="PTHR11961">
    <property type="entry name" value="CYTOCHROME C"/>
    <property type="match status" value="1"/>
</dbReference>
<dbReference type="Pfam" id="PF00034">
    <property type="entry name" value="Cytochrom_C"/>
    <property type="match status" value="1"/>
</dbReference>
<dbReference type="PRINTS" id="PR00604">
    <property type="entry name" value="CYTCHRMECIAB"/>
</dbReference>
<dbReference type="SUPFAM" id="SSF46626">
    <property type="entry name" value="Cytochrome c"/>
    <property type="match status" value="1"/>
</dbReference>
<dbReference type="PROSITE" id="PS51007">
    <property type="entry name" value="CYTC"/>
    <property type="match status" value="1"/>
</dbReference>
<feature type="initiator methionine" description="Removed">
    <location>
        <position position="1"/>
    </location>
</feature>
<feature type="chain" id="PRO_0000108263" description="Cytochrome c">
    <location>
        <begin position="2"/>
        <end position="108"/>
    </location>
</feature>
<feature type="binding site" description="covalent">
    <location>
        <position position="19"/>
    </location>
    <ligand>
        <name>heme c</name>
        <dbReference type="ChEBI" id="CHEBI:61717"/>
    </ligand>
</feature>
<feature type="binding site" description="covalent">
    <location>
        <position position="22"/>
    </location>
    <ligand>
        <name>heme c</name>
        <dbReference type="ChEBI" id="CHEBI:61717"/>
    </ligand>
</feature>
<feature type="binding site" description="axial binding residue">
    <location>
        <position position="23"/>
    </location>
    <ligand>
        <name>heme c</name>
        <dbReference type="ChEBI" id="CHEBI:61717"/>
    </ligand>
    <ligandPart>
        <name>Fe</name>
        <dbReference type="ChEBI" id="CHEBI:18248"/>
    </ligandPart>
</feature>
<feature type="binding site" description="axial binding residue">
    <location>
        <position position="85"/>
    </location>
    <ligand>
        <name>heme c</name>
        <dbReference type="ChEBI" id="CHEBI:61717"/>
    </ligand>
    <ligandPart>
        <name>Fe</name>
        <dbReference type="ChEBI" id="CHEBI:18248"/>
    </ligandPart>
</feature>
<name>CYC_LUCCU</name>
<sequence>MGVPAGDVEKGKKIFVQRCAQCHTVEAGGKHKVGPNLHGLFGRKTGQAPGFAYTNANKAKGITWQDDTLFEYLENPKKYIPGTKMIFAGLKKPNERGDLIAYLKSATK</sequence>
<accession>P00036</accession>
<protein>
    <recommendedName>
        <fullName>Cytochrome c</fullName>
    </recommendedName>
</protein>
<keyword id="KW-0903">Direct protein sequencing</keyword>
<keyword id="KW-0249">Electron transport</keyword>
<keyword id="KW-0349">Heme</keyword>
<keyword id="KW-0408">Iron</keyword>
<keyword id="KW-0479">Metal-binding</keyword>
<keyword id="KW-0496">Mitochondrion</keyword>
<keyword id="KW-0679">Respiratory chain</keyword>
<keyword id="KW-0813">Transport</keyword>
<organism>
    <name type="scientific">Lucilia cuprina</name>
    <name type="common">Green bottle fly</name>
    <name type="synonym">Australian sheep blowfly</name>
    <dbReference type="NCBI Taxonomy" id="7375"/>
    <lineage>
        <taxon>Eukaryota</taxon>
        <taxon>Metazoa</taxon>
        <taxon>Ecdysozoa</taxon>
        <taxon>Arthropoda</taxon>
        <taxon>Hexapoda</taxon>
        <taxon>Insecta</taxon>
        <taxon>Pterygota</taxon>
        <taxon>Neoptera</taxon>
        <taxon>Endopterygota</taxon>
        <taxon>Diptera</taxon>
        <taxon>Brachycera</taxon>
        <taxon>Muscomorpha</taxon>
        <taxon>Oestroidea</taxon>
        <taxon>Calliphoridae</taxon>
        <taxon>Luciliinae</taxon>
        <taxon>Lucilia</taxon>
    </lineage>
</organism>
<comment type="function">
    <text>Electron carrier protein. The oxidized form of the cytochrome c heme group can accept an electron from the heme group of the cytochrome c1 subunit of cytochrome reductase. Cytochrome c then transfers this electron to the cytochrome oxidase complex, the final protein carrier in the mitochondrial electron-transport chain.</text>
</comment>
<comment type="subcellular location">
    <subcellularLocation>
        <location>Mitochondrion intermembrane space</location>
    </subcellularLocation>
    <text>Loosely associated with the inner membrane.</text>
</comment>
<comment type="PTM">
    <text>Binds 1 heme c group covalently per subunit.</text>
</comment>
<comment type="similarity">
    <text evidence="1">Belongs to the cytochrome c family.</text>
</comment>
<comment type="online information" name="Protein Spotlight">
    <link uri="https://www.proteinspotlight.org/back_issues/076"/>
    <text>Life shuttle - Issue 76 of November 2006</text>
</comment>
<reference key="1">
    <citation type="journal article" date="1978" name="Biochim. Biophys. Acta">
        <title>The amino acid sequence of cytochrome c from the blowfly Lucilia cuprina.</title>
        <authorList>
            <person name="Shaw D.C."/>
            <person name="Williams K.L."/>
            <person name="Smith E."/>
            <person name="Birt L.M."/>
        </authorList>
    </citation>
    <scope>PRELIMINARY PROTEIN SEQUENCE</scope>
    <scope>PROTEIN SEQUENCE OF 45-50</scope>
</reference>
<evidence type="ECO:0000305" key="1"/>
<proteinExistence type="evidence at protein level"/>